<organism>
    <name type="scientific">Haemophilus influenzae (strain PittGG)</name>
    <dbReference type="NCBI Taxonomy" id="374931"/>
    <lineage>
        <taxon>Bacteria</taxon>
        <taxon>Pseudomonadati</taxon>
        <taxon>Pseudomonadota</taxon>
        <taxon>Gammaproteobacteria</taxon>
        <taxon>Pasteurellales</taxon>
        <taxon>Pasteurellaceae</taxon>
        <taxon>Haemophilus</taxon>
    </lineage>
</organism>
<name>UXAC_HAEIG</name>
<sequence length="467" mass="54082">MKSFMDENFLLSTDTAKILYHDYAKNKPIFDYHCHLNPREVAENRQFNDLAEIWLEGDHYKWRALRTAGVPEELITGKATNYQKYLAWAKTVPLCIGNPIYHWTHLELRRPFGITNMLFNPQNAEKIWHQCNEMLQQPEFSARGIMQKMNVKLVGTTDDPIDSLQYHQAIKNDESFDIDVVPSWRPDKVFKIELPQFNDYLVQLSEIADVDIYTFADLKKALLKRLEYFDAQGCKSADHGMEIVRFSAIPDESVLNSILQKRLQNQPLLEEEVAQFSTAILVWLASEYCKRHWVMQMHIGAIRNNNSRMFALLGADSGFDSIGDRAYAYPLSRLLDAMDKENQLPKTILYCLNPRDNEMIASMIGNFQGDGIAGKIQFGSGWWFNDQKDGMERQLQQLSQLGLLSQFVGMLTDSRSFLSYTRHEYFRRILCEMIGGWVEKGEAPNDISLLGKMIEDICFNNAKNYFK</sequence>
<feature type="chain" id="PRO_1000044769" description="Uronate isomerase">
    <location>
        <begin position="1"/>
        <end position="467"/>
    </location>
</feature>
<reference key="1">
    <citation type="journal article" date="2007" name="Genome Biol.">
        <title>Characterization and modeling of the Haemophilus influenzae core and supragenomes based on the complete genomic sequences of Rd and 12 clinical nontypeable strains.</title>
        <authorList>
            <person name="Hogg J.S."/>
            <person name="Hu F.Z."/>
            <person name="Janto B."/>
            <person name="Boissy R."/>
            <person name="Hayes J."/>
            <person name="Keefe R."/>
            <person name="Post J.C."/>
            <person name="Ehrlich G.D."/>
        </authorList>
    </citation>
    <scope>NUCLEOTIDE SEQUENCE [LARGE SCALE GENOMIC DNA]</scope>
    <source>
        <strain>PittGG</strain>
    </source>
</reference>
<accession>A5UFL7</accession>
<proteinExistence type="inferred from homology"/>
<evidence type="ECO:0000255" key="1">
    <source>
        <dbReference type="HAMAP-Rule" id="MF_00675"/>
    </source>
</evidence>
<keyword id="KW-0413">Isomerase</keyword>
<comment type="catalytic activity">
    <reaction evidence="1">
        <text>D-glucuronate = D-fructuronate</text>
        <dbReference type="Rhea" id="RHEA:13049"/>
        <dbReference type="ChEBI" id="CHEBI:58720"/>
        <dbReference type="ChEBI" id="CHEBI:59863"/>
        <dbReference type="EC" id="5.3.1.12"/>
    </reaction>
</comment>
<comment type="catalytic activity">
    <reaction evidence="1">
        <text>aldehydo-D-galacturonate = keto-D-tagaturonate</text>
        <dbReference type="Rhea" id="RHEA:27702"/>
        <dbReference type="ChEBI" id="CHEBI:12952"/>
        <dbReference type="ChEBI" id="CHEBI:17886"/>
        <dbReference type="EC" id="5.3.1.12"/>
    </reaction>
</comment>
<comment type="pathway">
    <text evidence="1">Carbohydrate metabolism; pentose and glucuronate interconversion.</text>
</comment>
<comment type="similarity">
    <text evidence="1">Belongs to the metallo-dependent hydrolases superfamily. Uronate isomerase family.</text>
</comment>
<gene>
    <name evidence="1" type="primary">uxaC</name>
    <name type="ordered locus">CGSHiGG_02740</name>
</gene>
<dbReference type="EC" id="5.3.1.12" evidence="1"/>
<dbReference type="EMBL" id="CP000672">
    <property type="protein sequence ID" value="ABQ99572.1"/>
    <property type="molecule type" value="Genomic_DNA"/>
</dbReference>
<dbReference type="SMR" id="A5UFL7"/>
<dbReference type="KEGG" id="hiq:CGSHiGG_02740"/>
<dbReference type="HOGENOM" id="CLU_044465_1_0_6"/>
<dbReference type="UniPathway" id="UPA00246"/>
<dbReference type="Proteomes" id="UP000001990">
    <property type="component" value="Chromosome"/>
</dbReference>
<dbReference type="GO" id="GO:0008880">
    <property type="term" value="F:glucuronate isomerase activity"/>
    <property type="evidence" value="ECO:0007669"/>
    <property type="project" value="UniProtKB-UniRule"/>
</dbReference>
<dbReference type="GO" id="GO:0019698">
    <property type="term" value="P:D-galacturonate catabolic process"/>
    <property type="evidence" value="ECO:0007669"/>
    <property type="project" value="TreeGrafter"/>
</dbReference>
<dbReference type="GO" id="GO:0042840">
    <property type="term" value="P:D-glucuronate catabolic process"/>
    <property type="evidence" value="ECO:0007669"/>
    <property type="project" value="TreeGrafter"/>
</dbReference>
<dbReference type="Gene3D" id="3.20.20.140">
    <property type="entry name" value="Metal-dependent hydrolases"/>
    <property type="match status" value="1"/>
</dbReference>
<dbReference type="Gene3D" id="1.10.2020.10">
    <property type="entry name" value="uronate isomerase, domain 2, chain A"/>
    <property type="match status" value="1"/>
</dbReference>
<dbReference type="HAMAP" id="MF_00675">
    <property type="entry name" value="UxaC"/>
    <property type="match status" value="1"/>
</dbReference>
<dbReference type="InterPro" id="IPR032466">
    <property type="entry name" value="Metal_Hydrolase"/>
</dbReference>
<dbReference type="InterPro" id="IPR003766">
    <property type="entry name" value="Uronate_isomerase"/>
</dbReference>
<dbReference type="NCBIfam" id="NF002794">
    <property type="entry name" value="PRK02925.1"/>
    <property type="match status" value="1"/>
</dbReference>
<dbReference type="PANTHER" id="PTHR30068">
    <property type="entry name" value="URONATE ISOMERASE"/>
    <property type="match status" value="1"/>
</dbReference>
<dbReference type="PANTHER" id="PTHR30068:SF4">
    <property type="entry name" value="URONATE ISOMERASE"/>
    <property type="match status" value="1"/>
</dbReference>
<dbReference type="Pfam" id="PF02614">
    <property type="entry name" value="UxaC"/>
    <property type="match status" value="1"/>
</dbReference>
<dbReference type="SUPFAM" id="SSF51556">
    <property type="entry name" value="Metallo-dependent hydrolases"/>
    <property type="match status" value="1"/>
</dbReference>
<protein>
    <recommendedName>
        <fullName evidence="1">Uronate isomerase</fullName>
        <ecNumber evidence="1">5.3.1.12</ecNumber>
    </recommendedName>
    <alternativeName>
        <fullName evidence="1">Glucuronate isomerase</fullName>
    </alternativeName>
    <alternativeName>
        <fullName evidence="1">Uronic isomerase</fullName>
    </alternativeName>
</protein>